<reference key="1">
    <citation type="journal article" date="1992" name="Plant Mol. Biol.">
        <title>Alfalfa root nodule phosphoenolpyruvate carboxylase: characterization of the cDNA and expression in effective and plant-controlled ineffective nodules.</title>
        <authorList>
            <person name="Pathirana S.M."/>
            <person name="Vance C.P."/>
            <person name="Miller S.S."/>
            <person name="Gantt J.S."/>
        </authorList>
    </citation>
    <scope>NUCLEOTIDE SEQUENCE [MRNA]</scope>
</reference>
<reference key="2">
    <citation type="submission" date="1996-01" db="EMBL/GenBank/DDBJ databases">
        <authorList>
            <person name="Pathirana S.M."/>
            <person name="Gantt J.S."/>
        </authorList>
    </citation>
    <scope>NUCLEOTIDE SEQUENCE</scope>
    <source>
        <strain>cv. Saranac</strain>
    </source>
</reference>
<name>CAPP_MEDSA</name>
<organism>
    <name type="scientific">Medicago sativa</name>
    <name type="common">Alfalfa</name>
    <dbReference type="NCBI Taxonomy" id="3879"/>
    <lineage>
        <taxon>Eukaryota</taxon>
        <taxon>Viridiplantae</taxon>
        <taxon>Streptophyta</taxon>
        <taxon>Embryophyta</taxon>
        <taxon>Tracheophyta</taxon>
        <taxon>Spermatophyta</taxon>
        <taxon>Magnoliopsida</taxon>
        <taxon>eudicotyledons</taxon>
        <taxon>Gunneridae</taxon>
        <taxon>Pentapetalae</taxon>
        <taxon>rosids</taxon>
        <taxon>fabids</taxon>
        <taxon>Fabales</taxon>
        <taxon>Fabaceae</taxon>
        <taxon>Papilionoideae</taxon>
        <taxon>50 kb inversion clade</taxon>
        <taxon>NPAAA clade</taxon>
        <taxon>Hologalegina</taxon>
        <taxon>IRL clade</taxon>
        <taxon>Trifolieae</taxon>
        <taxon>Medicago</taxon>
    </lineage>
</organism>
<dbReference type="EC" id="4.1.1.31"/>
<dbReference type="EMBL" id="M83086">
    <property type="protein sequence ID" value="AAB46618.1"/>
    <property type="molecule type" value="mRNA"/>
</dbReference>
<dbReference type="EMBL" id="L39371">
    <property type="protein sequence ID" value="AAB41903.1"/>
    <property type="molecule type" value="Genomic_DNA"/>
</dbReference>
<dbReference type="PIR" id="S26235">
    <property type="entry name" value="S26235"/>
</dbReference>
<dbReference type="SMR" id="Q02735"/>
<dbReference type="GO" id="GO:0048046">
    <property type="term" value="C:apoplast"/>
    <property type="evidence" value="ECO:0007669"/>
    <property type="project" value="TreeGrafter"/>
</dbReference>
<dbReference type="GO" id="GO:0009507">
    <property type="term" value="C:chloroplast"/>
    <property type="evidence" value="ECO:0007669"/>
    <property type="project" value="TreeGrafter"/>
</dbReference>
<dbReference type="GO" id="GO:0005829">
    <property type="term" value="C:cytosol"/>
    <property type="evidence" value="ECO:0007669"/>
    <property type="project" value="TreeGrafter"/>
</dbReference>
<dbReference type="GO" id="GO:0008964">
    <property type="term" value="F:phosphoenolpyruvate carboxylase activity"/>
    <property type="evidence" value="ECO:0007669"/>
    <property type="project" value="UniProtKB-EC"/>
</dbReference>
<dbReference type="GO" id="GO:0015977">
    <property type="term" value="P:carbon fixation"/>
    <property type="evidence" value="ECO:0007669"/>
    <property type="project" value="UniProtKB-KW"/>
</dbReference>
<dbReference type="GO" id="GO:0048366">
    <property type="term" value="P:leaf development"/>
    <property type="evidence" value="ECO:0007669"/>
    <property type="project" value="TreeGrafter"/>
</dbReference>
<dbReference type="GO" id="GO:0015979">
    <property type="term" value="P:photosynthesis"/>
    <property type="evidence" value="ECO:0007669"/>
    <property type="project" value="UniProtKB-KW"/>
</dbReference>
<dbReference type="GO" id="GO:0006099">
    <property type="term" value="P:tricarboxylic acid cycle"/>
    <property type="evidence" value="ECO:0007669"/>
    <property type="project" value="InterPro"/>
</dbReference>
<dbReference type="FunFam" id="1.20.1440.90:FF:000001">
    <property type="entry name" value="Phosphoenolpyruvate carboxylase 1"/>
    <property type="match status" value="1"/>
</dbReference>
<dbReference type="Gene3D" id="1.20.1440.90">
    <property type="entry name" value="Phosphoenolpyruvate/pyruvate domain"/>
    <property type="match status" value="1"/>
</dbReference>
<dbReference type="HAMAP" id="MF_00595">
    <property type="entry name" value="PEPcase_type1"/>
    <property type="match status" value="1"/>
</dbReference>
<dbReference type="InterPro" id="IPR021135">
    <property type="entry name" value="PEP_COase"/>
</dbReference>
<dbReference type="InterPro" id="IPR022805">
    <property type="entry name" value="PEP_COase_bac/pln-type"/>
</dbReference>
<dbReference type="InterPro" id="IPR018129">
    <property type="entry name" value="PEP_COase_Lys_AS"/>
</dbReference>
<dbReference type="InterPro" id="IPR033129">
    <property type="entry name" value="PEPCASE_His_AS"/>
</dbReference>
<dbReference type="InterPro" id="IPR015813">
    <property type="entry name" value="Pyrv/PenolPyrv_kinase-like_dom"/>
</dbReference>
<dbReference type="NCBIfam" id="NF000584">
    <property type="entry name" value="PRK00009.1"/>
    <property type="match status" value="1"/>
</dbReference>
<dbReference type="PANTHER" id="PTHR30523">
    <property type="entry name" value="PHOSPHOENOLPYRUVATE CARBOXYLASE"/>
    <property type="match status" value="1"/>
</dbReference>
<dbReference type="PANTHER" id="PTHR30523:SF37">
    <property type="entry name" value="PHOSPHOENOLPYRUVATE CARBOXYLASE"/>
    <property type="match status" value="1"/>
</dbReference>
<dbReference type="Pfam" id="PF00311">
    <property type="entry name" value="PEPcase"/>
    <property type="match status" value="1"/>
</dbReference>
<dbReference type="PRINTS" id="PR00150">
    <property type="entry name" value="PEPCARBXLASE"/>
</dbReference>
<dbReference type="SUPFAM" id="SSF51621">
    <property type="entry name" value="Phosphoenolpyruvate/pyruvate domain"/>
    <property type="match status" value="1"/>
</dbReference>
<dbReference type="PROSITE" id="PS00781">
    <property type="entry name" value="PEPCASE_1"/>
    <property type="match status" value="1"/>
</dbReference>
<dbReference type="PROSITE" id="PS00393">
    <property type="entry name" value="PEPCASE_2"/>
    <property type="match status" value="1"/>
</dbReference>
<protein>
    <recommendedName>
        <fullName>Phosphoenolpyruvate carboxylase</fullName>
        <shortName>PEPC</shortName>
        <shortName>PEPCase</shortName>
        <ecNumber>4.1.1.31</ecNumber>
    </recommendedName>
</protein>
<evidence type="ECO:0000250" key="1"/>
<evidence type="ECO:0000305" key="2"/>
<keyword id="KW-0021">Allosteric enzyme</keyword>
<keyword id="KW-0120">Carbon dioxide fixation</keyword>
<keyword id="KW-0963">Cytoplasm</keyword>
<keyword id="KW-0456">Lyase</keyword>
<keyword id="KW-0460">Magnesium</keyword>
<keyword id="KW-0597">Phosphoprotein</keyword>
<keyword id="KW-0602">Photosynthesis</keyword>
<accession>Q02735</accession>
<gene>
    <name type="primary">PEPC</name>
</gene>
<proteinExistence type="evidence at transcript level"/>
<sequence>MANKMEKMASIDAQLRQLVPAKVSEDDKLIEYDALLLDRFLDILQDLHGEDLKDSVQEVYELSAEYERKHDPKKLEELGNLITSFDAGDSIVVAKSFSHMLNLANLAEEVQIAHRRRNKLKKGDFRDESNATTESDIEETLKKLVFDMKKSPQEVFDALKNQTVDLVLTAHPTQSVRRSLLQKHGRVRNCLSQLYAKDITPDDKQELDEALQREIQAAFRTDEIKRTPPTPQDEMRAGMSYFHETIWKGVPKFLRRVDTALKNIGINERVPYNAPLIQFSSWMGGDRDGNPRVTPEVTRDVCLLARMMAANLYYSQIEDLMFELSMWRCNDELRVRAEELHRNSKKDEVAKHYIEFWKKIPLNEPYRVVLGEVRDKLYRTRERSRYLLAHGYCEIPEEATFTNVDEFLEPLELCYRSLCACGDRAIADGSLLDFLRQVSTFGLSLVRLDIRQESDRHTDVMDAITKHLEIGSYQEWSEEKRQEWLLSELIGKRPLFGPDLPQTDEIRDVLDTFRVIAELPSDNFGAYIISMATAPSDVLAVELLQRECKVRNPLRVVPLFEKLDDLESAPAALARLFSIDWYINRIDGKQEVMIGYSDSGKDAGRFSAAWQLYKAQEDLIKVAQKFGVKLTMFHGRGGTVGRGGGPTHLAILSQPPETIHGSLRVTVQGEVIEQSFGEEHLCFRTLQRFTAATLEHGMRPPSSPKPEWRALMDQMAVIATEEYRSIVFKEPRFVEYFRLATPEMEYGRMNIGSRPAKRRPSGGIETLRAIPWIFAWTQTRFHLPVWLGFGAAFRQVVQKDVKNLHMLQEMYNQWPFFRVTIDLVEMVFAKGDPGIAALNDRLLVSKDLWPFGEQLRSKYEETKKLLLQVAAHKEVLEGDPYLKQRLRLRDSYITTLNVFQAYTLKRIRDPNYKVEVRPPISKESAETSKPADELVTLNPTSEYAPGLEDTLILTMKGIAAGMQNTG</sequence>
<comment type="function">
    <text>Through the carboxylation of phosphoenolpyruvate (PEP) it forms oxaloacetate, a four-carbon dicarboxylic acid source for the tricarboxylic acid cycle.</text>
</comment>
<comment type="catalytic activity">
    <reaction>
        <text>oxaloacetate + phosphate = phosphoenolpyruvate + hydrogencarbonate</text>
        <dbReference type="Rhea" id="RHEA:28370"/>
        <dbReference type="ChEBI" id="CHEBI:16452"/>
        <dbReference type="ChEBI" id="CHEBI:17544"/>
        <dbReference type="ChEBI" id="CHEBI:43474"/>
        <dbReference type="ChEBI" id="CHEBI:58702"/>
        <dbReference type="EC" id="4.1.1.31"/>
    </reaction>
</comment>
<comment type="cofactor">
    <cofactor evidence="1">
        <name>Mg(2+)</name>
        <dbReference type="ChEBI" id="CHEBI:18420"/>
    </cofactor>
</comment>
<comment type="activity regulation">
    <text>By light-reversible phosphorylation.</text>
</comment>
<comment type="subunit">
    <text>Homotetramer.</text>
</comment>
<comment type="subcellular location">
    <subcellularLocation>
        <location>Cytoplasm</location>
    </subcellularLocation>
</comment>
<comment type="similarity">
    <text evidence="2">Belongs to the PEPCase type 1 family.</text>
</comment>
<feature type="chain" id="PRO_0000166669" description="Phosphoenolpyruvate carboxylase">
    <location>
        <begin position="1"/>
        <end position="966"/>
    </location>
</feature>
<feature type="active site" evidence="1">
    <location>
        <position position="171"/>
    </location>
</feature>
<feature type="active site" evidence="1">
    <location>
        <position position="601"/>
    </location>
</feature>
<feature type="modified residue" description="Phosphoserine" evidence="1">
    <location>
        <position position="10"/>
    </location>
</feature>